<accession>A4W573</accession>
<comment type="catalytic activity">
    <reaction evidence="1">
        <text>tRNA(Gly) + glycine + ATP = glycyl-tRNA(Gly) + AMP + diphosphate</text>
        <dbReference type="Rhea" id="RHEA:16013"/>
        <dbReference type="Rhea" id="RHEA-COMP:9664"/>
        <dbReference type="Rhea" id="RHEA-COMP:9683"/>
        <dbReference type="ChEBI" id="CHEBI:30616"/>
        <dbReference type="ChEBI" id="CHEBI:33019"/>
        <dbReference type="ChEBI" id="CHEBI:57305"/>
        <dbReference type="ChEBI" id="CHEBI:78442"/>
        <dbReference type="ChEBI" id="CHEBI:78522"/>
        <dbReference type="ChEBI" id="CHEBI:456215"/>
        <dbReference type="EC" id="6.1.1.14"/>
    </reaction>
</comment>
<comment type="subunit">
    <text evidence="1">Tetramer of two alpha and two beta subunits.</text>
</comment>
<comment type="subcellular location">
    <subcellularLocation>
        <location evidence="1">Cytoplasm</location>
    </subcellularLocation>
</comment>
<comment type="similarity">
    <text evidence="1">Belongs to the class-II aminoacyl-tRNA synthetase family.</text>
</comment>
<gene>
    <name evidence="1" type="primary">glyS</name>
    <name type="ordered locus">Ent638_0163</name>
</gene>
<organism>
    <name type="scientific">Enterobacter sp. (strain 638)</name>
    <dbReference type="NCBI Taxonomy" id="399742"/>
    <lineage>
        <taxon>Bacteria</taxon>
        <taxon>Pseudomonadati</taxon>
        <taxon>Pseudomonadota</taxon>
        <taxon>Gammaproteobacteria</taxon>
        <taxon>Enterobacterales</taxon>
        <taxon>Enterobacteriaceae</taxon>
        <taxon>Enterobacter</taxon>
    </lineage>
</organism>
<proteinExistence type="inferred from homology"/>
<keyword id="KW-0030">Aminoacyl-tRNA synthetase</keyword>
<keyword id="KW-0067">ATP-binding</keyword>
<keyword id="KW-0963">Cytoplasm</keyword>
<keyword id="KW-0436">Ligase</keyword>
<keyword id="KW-0547">Nucleotide-binding</keyword>
<keyword id="KW-0648">Protein biosynthesis</keyword>
<sequence length="689" mass="76673">MSDKTFLVEIGTEELPPKALRSLAESFAANVTAELDNAGLTHGKIEWFAAPRRLALKVANLAASQADREVEKRGPAISQAFDAEGKPSKAAEGWARGCGITVDQAERLTTDKGEWLLYRAHVKGESAEALLPNMIATSLAKLPIPKLMRWGASDVHFVRPVHTVTLLLGDTVIPATILGIQSDRVIRGHRFMGEPEFTIDNADQYPQILLERGKVIADYELRKAKIKADAEEAARKIGGNADLSESLLEEVTSLVEWPVVLTAKFEEKFLAVPAEALVYTMKGDQKYFPVYANDGKLLPNFIFVANIESKDPIQIISGNEKVVRPRLADAEFFFNTDRKKRLEDHLPRLQTVLFQQQLGTLRDKTDRIAELSGWIAREIGADVNHATRAGLLSKCDLMTNMVFEFTDTQGVMGMHYARHDGEAEDVAVALNEQYQPRFAGDDLPSNPVACAVAIADKMDTLAGIFGIGQHPKGDKDPFALRRAALGVLRIIVEKNLSLDLQTLTEEAVRLYGDKLTNAKVVDEVIDFMLGRFRAWYQDEGYTVDTIQAVLARRPTRPADFDARMKAVSHFRTLEAASALAAANKRVSNILAKSDETLNERVNAATLKEPEEIALALQVVVLRDKLEPFFAEGRYQEALVELAELREVIDAFFEKVMVNVEDKDLRINRLSMLEKLRELFLRVADISLLQ</sequence>
<reference key="1">
    <citation type="journal article" date="2010" name="PLoS Genet.">
        <title>Genome sequence of the plant growth promoting endophytic bacterium Enterobacter sp. 638.</title>
        <authorList>
            <person name="Taghavi S."/>
            <person name="van der Lelie D."/>
            <person name="Hoffman A."/>
            <person name="Zhang Y.B."/>
            <person name="Walla M.D."/>
            <person name="Vangronsveld J."/>
            <person name="Newman L."/>
            <person name="Monchy S."/>
        </authorList>
    </citation>
    <scope>NUCLEOTIDE SEQUENCE [LARGE SCALE GENOMIC DNA]</scope>
    <source>
        <strain>638</strain>
    </source>
</reference>
<protein>
    <recommendedName>
        <fullName evidence="1">Glycine--tRNA ligase beta subunit</fullName>
        <ecNumber evidence="1">6.1.1.14</ecNumber>
    </recommendedName>
    <alternativeName>
        <fullName evidence="1">Glycyl-tRNA synthetase beta subunit</fullName>
        <shortName evidence="1">GlyRS</shortName>
    </alternativeName>
</protein>
<evidence type="ECO:0000255" key="1">
    <source>
        <dbReference type="HAMAP-Rule" id="MF_00255"/>
    </source>
</evidence>
<name>SYGB_ENT38</name>
<dbReference type="EC" id="6.1.1.14" evidence="1"/>
<dbReference type="EMBL" id="CP000653">
    <property type="protein sequence ID" value="ABP58853.1"/>
    <property type="molecule type" value="Genomic_DNA"/>
</dbReference>
<dbReference type="RefSeq" id="WP_011915429.1">
    <property type="nucleotide sequence ID" value="NC_009436.1"/>
</dbReference>
<dbReference type="SMR" id="A4W573"/>
<dbReference type="STRING" id="399742.Ent638_0163"/>
<dbReference type="KEGG" id="ent:Ent638_0163"/>
<dbReference type="eggNOG" id="COG0751">
    <property type="taxonomic scope" value="Bacteria"/>
</dbReference>
<dbReference type="HOGENOM" id="CLU_007220_2_2_6"/>
<dbReference type="OrthoDB" id="9775440at2"/>
<dbReference type="Proteomes" id="UP000000230">
    <property type="component" value="Chromosome"/>
</dbReference>
<dbReference type="GO" id="GO:0005829">
    <property type="term" value="C:cytosol"/>
    <property type="evidence" value="ECO:0007669"/>
    <property type="project" value="TreeGrafter"/>
</dbReference>
<dbReference type="GO" id="GO:0004814">
    <property type="term" value="F:arginine-tRNA ligase activity"/>
    <property type="evidence" value="ECO:0007669"/>
    <property type="project" value="InterPro"/>
</dbReference>
<dbReference type="GO" id="GO:0005524">
    <property type="term" value="F:ATP binding"/>
    <property type="evidence" value="ECO:0007669"/>
    <property type="project" value="UniProtKB-UniRule"/>
</dbReference>
<dbReference type="GO" id="GO:0004820">
    <property type="term" value="F:glycine-tRNA ligase activity"/>
    <property type="evidence" value="ECO:0007669"/>
    <property type="project" value="UniProtKB-UniRule"/>
</dbReference>
<dbReference type="GO" id="GO:0006420">
    <property type="term" value="P:arginyl-tRNA aminoacylation"/>
    <property type="evidence" value="ECO:0007669"/>
    <property type="project" value="InterPro"/>
</dbReference>
<dbReference type="GO" id="GO:0006426">
    <property type="term" value="P:glycyl-tRNA aminoacylation"/>
    <property type="evidence" value="ECO:0007669"/>
    <property type="project" value="UniProtKB-UniRule"/>
</dbReference>
<dbReference type="HAMAP" id="MF_00255">
    <property type="entry name" value="Gly_tRNA_synth_beta"/>
    <property type="match status" value="1"/>
</dbReference>
<dbReference type="InterPro" id="IPR008909">
    <property type="entry name" value="DALR_anticod-bd"/>
</dbReference>
<dbReference type="InterPro" id="IPR015944">
    <property type="entry name" value="Gly-tRNA-synth_bsu"/>
</dbReference>
<dbReference type="InterPro" id="IPR006194">
    <property type="entry name" value="Gly-tRNA-synth_heterodimer"/>
</dbReference>
<dbReference type="NCBIfam" id="TIGR00211">
    <property type="entry name" value="glyS"/>
    <property type="match status" value="1"/>
</dbReference>
<dbReference type="PANTHER" id="PTHR30075:SF2">
    <property type="entry name" value="GLYCINE--TRNA LIGASE, CHLOROPLASTIC_MITOCHONDRIAL 2"/>
    <property type="match status" value="1"/>
</dbReference>
<dbReference type="PANTHER" id="PTHR30075">
    <property type="entry name" value="GLYCYL-TRNA SYNTHETASE"/>
    <property type="match status" value="1"/>
</dbReference>
<dbReference type="Pfam" id="PF05746">
    <property type="entry name" value="DALR_1"/>
    <property type="match status" value="1"/>
</dbReference>
<dbReference type="Pfam" id="PF02092">
    <property type="entry name" value="tRNA_synt_2f"/>
    <property type="match status" value="1"/>
</dbReference>
<dbReference type="PRINTS" id="PR01045">
    <property type="entry name" value="TRNASYNTHGB"/>
</dbReference>
<dbReference type="SUPFAM" id="SSF109604">
    <property type="entry name" value="HD-domain/PDEase-like"/>
    <property type="match status" value="1"/>
</dbReference>
<dbReference type="PROSITE" id="PS50861">
    <property type="entry name" value="AA_TRNA_LIGASE_II_GLYAB"/>
    <property type="match status" value="1"/>
</dbReference>
<feature type="chain" id="PRO_1000059061" description="Glycine--tRNA ligase beta subunit">
    <location>
        <begin position="1"/>
        <end position="689"/>
    </location>
</feature>